<gene>
    <name type="primary">Klhl24</name>
    <name type="synonym">Dre1</name>
</gene>
<keyword id="KW-0965">Cell junction</keyword>
<keyword id="KW-0966">Cell projection</keyword>
<keyword id="KW-0963">Cytoplasm</keyword>
<keyword id="KW-0880">Kelch repeat</keyword>
<keyword id="KW-1185">Reference proteome</keyword>
<keyword id="KW-0677">Repeat</keyword>
<keyword id="KW-0832">Ubl conjugation</keyword>
<keyword id="KW-0833">Ubl conjugation pathway</keyword>
<feature type="chain" id="PRO_0000261596" description="Kelch-like protein 24">
    <location>
        <begin position="1"/>
        <end position="600"/>
    </location>
</feature>
<feature type="domain" description="BTB" evidence="2">
    <location>
        <begin position="66"/>
        <end position="133"/>
    </location>
</feature>
<feature type="domain" description="BACK">
    <location>
        <begin position="168"/>
        <end position="270"/>
    </location>
</feature>
<feature type="repeat" description="Kelch 1">
    <location>
        <begin position="314"/>
        <end position="363"/>
    </location>
</feature>
<feature type="repeat" description="Kelch 2">
    <location>
        <begin position="365"/>
        <end position="407"/>
    </location>
</feature>
<feature type="repeat" description="Kelch 3">
    <location>
        <begin position="408"/>
        <end position="454"/>
    </location>
</feature>
<feature type="repeat" description="Kelch 4">
    <location>
        <begin position="456"/>
        <end position="502"/>
    </location>
</feature>
<feature type="repeat" description="Kelch 5">
    <location>
        <begin position="504"/>
        <end position="544"/>
    </location>
</feature>
<feature type="repeat" description="Kelch 6">
    <location>
        <begin position="546"/>
        <end position="592"/>
    </location>
</feature>
<feature type="sequence conflict" description="In Ref. 1; BAC56128." evidence="4" ref="1">
    <original>R</original>
    <variation>T</variation>
    <location>
        <position position="8"/>
    </location>
</feature>
<feature type="sequence conflict" description="In Ref. 1; BAC56128." evidence="4" ref="1">
    <original>H</original>
    <variation>D</variation>
    <location>
        <position position="201"/>
    </location>
</feature>
<feature type="sequence conflict" description="In Ref. 1; BAC56128." evidence="4" ref="1">
    <original>N</original>
    <variation>F</variation>
    <location>
        <position position="381"/>
    </location>
</feature>
<feature type="sequence conflict" description="In Ref. 1; BAC56128." evidence="4" ref="1">
    <original>D</original>
    <variation>H</variation>
    <location>
        <position position="560"/>
    </location>
</feature>
<accession>Q56A24</accession>
<accession>Q812D9</accession>
<evidence type="ECO:0000250" key="1">
    <source>
        <dbReference type="UniProtKB" id="Q6TFL4"/>
    </source>
</evidence>
<evidence type="ECO:0000255" key="2">
    <source>
        <dbReference type="PROSITE-ProRule" id="PRU00037"/>
    </source>
</evidence>
<evidence type="ECO:0000269" key="3">
    <source>
    </source>
</evidence>
<evidence type="ECO:0000305" key="4"/>
<sequence>MVLILGRRLNREDLGVRDSPATKRKVFEMDPKSLTGHEYFDFSSGSSHAENILQIFNEFRDSRLFTDVIICVEGKEFPCHRAVLSACSSYFRAMFCNDHRESREMLVEINGILAEAMECFLQYVYTGKVKITTENVQYLFETSSLFQISVLRDACAKFLEEQLDPCNCLGIQRFADTHSLKTLFTKCKTFALQTFEDVSQHEEFLELDKDELIDYICSDELVIGKEEMVFEAVMRWVYRAVDLRRPLLHELLTHVRLPLLHPNYFVQTVEVDQLIQNSPECYQLLHEARRYHILGNEMMSPRTRPRRSTGYSEVIVVVGGCERVGGFNLPYTECYDPVTGEWKSLAKLPEFTKSEYAVCALRNDILVSGGRINSRDVWIYNSQLNIWIRVASLNKGRWRHKMAVLLGKVYVVGGYDGQNRLSSVECYDSFSNRWTEVAPLKEAVSSPAVTSCIGKLFVIGGGPDDNTCSDKVQSYDPETNSWLLRAAIPIAKRCITAVSLNNLIYVAGGLTKAVYCYDPVEDYWMHVQNTFSRQENCGMSVCNGKIYILGGRRENGEATDTILCYDPATSIITGVAAMPRPVSYHGCVTIHRYNEKCFKL</sequence>
<reference key="1">
    <citation type="submission" date="2003-01" db="EMBL/GenBank/DDBJ databases">
        <title>Identification of DRE1 which is downregulated in uterus when immature rats are injected estrogen subctaneously.</title>
        <authorList>
            <person name="Nomoto S."/>
            <person name="Ikeda K."/>
            <person name="Zhao J."/>
            <person name="Kayama F."/>
        </authorList>
    </citation>
    <scope>NUCLEOTIDE SEQUENCE [MRNA]</scope>
</reference>
<reference key="2">
    <citation type="journal article" date="2004" name="Genome Res.">
        <title>The status, quality, and expansion of the NIH full-length cDNA project: the Mammalian Gene Collection (MGC).</title>
        <authorList>
            <consortium name="The MGC Project Team"/>
        </authorList>
    </citation>
    <scope>NUCLEOTIDE SEQUENCE [LARGE SCALE MRNA]</scope>
    <source>
        <tissue>Brain</tissue>
    </source>
</reference>
<reference key="3">
    <citation type="journal article" date="2007" name="Mol. Cell. Neurosci.">
        <title>KRIP6: a novel BTB/kelch protein regulating function of kainate receptors.</title>
        <authorList>
            <person name="Laezza F."/>
            <person name="Wilding T.J."/>
            <person name="Sequeira S."/>
            <person name="Coussen F."/>
            <person name="Zhang X.Z."/>
            <person name="Hill-Robinson R."/>
            <person name="Mulle C."/>
            <person name="Huettner J.E."/>
            <person name="Craig A.M."/>
        </authorList>
    </citation>
    <scope>FUNCTION</scope>
    <scope>INTERACTION WITH GRIK2</scope>
    <scope>HOMODIMERIZATION</scope>
    <scope>SUBCELLULAR LOCATION</scope>
    <scope>TISSUE SPECIFICITY</scope>
    <scope>DEVELOPMENTAL STAGE</scope>
</reference>
<dbReference type="EMBL" id="AB101615">
    <property type="protein sequence ID" value="BAC56128.1"/>
    <property type="molecule type" value="mRNA"/>
</dbReference>
<dbReference type="EMBL" id="BC092204">
    <property type="protein sequence ID" value="AAH92204.1"/>
    <property type="molecule type" value="mRNA"/>
</dbReference>
<dbReference type="RefSeq" id="NP_001381158.1">
    <property type="nucleotide sequence ID" value="NM_001394229.1"/>
</dbReference>
<dbReference type="RefSeq" id="NP_852138.2">
    <property type="nucleotide sequence ID" value="NM_181473.3"/>
</dbReference>
<dbReference type="RefSeq" id="XP_038944203.1">
    <property type="nucleotide sequence ID" value="XM_039088275.2"/>
</dbReference>
<dbReference type="RefSeq" id="XP_038944204.1">
    <property type="nucleotide sequence ID" value="XM_039088276.2"/>
</dbReference>
<dbReference type="RefSeq" id="XP_063126539.1">
    <property type="nucleotide sequence ID" value="XM_063270469.1"/>
</dbReference>
<dbReference type="RefSeq" id="XP_063126540.1">
    <property type="nucleotide sequence ID" value="XM_063270470.1"/>
</dbReference>
<dbReference type="RefSeq" id="XP_063126541.1">
    <property type="nucleotide sequence ID" value="XM_063270471.1"/>
</dbReference>
<dbReference type="RefSeq" id="XP_063126542.1">
    <property type="nucleotide sequence ID" value="XM_063270472.1"/>
</dbReference>
<dbReference type="RefSeq" id="XP_063126543.1">
    <property type="nucleotide sequence ID" value="XM_063270473.1"/>
</dbReference>
<dbReference type="SMR" id="Q56A24"/>
<dbReference type="FunCoup" id="Q56A24">
    <property type="interactions" value="461"/>
</dbReference>
<dbReference type="STRING" id="10116.ENSRNOP00000050815"/>
<dbReference type="PhosphoSitePlus" id="Q56A24"/>
<dbReference type="PaxDb" id="10116-ENSRNOP00000050815"/>
<dbReference type="Ensembl" id="ENSRNOT00000052120.6">
    <property type="protein sequence ID" value="ENSRNOP00000050815.6"/>
    <property type="gene ID" value="ENSRNOG00000033372.6"/>
</dbReference>
<dbReference type="GeneID" id="303803"/>
<dbReference type="KEGG" id="rno:303803"/>
<dbReference type="AGR" id="RGD:727971"/>
<dbReference type="CTD" id="54800"/>
<dbReference type="RGD" id="727971">
    <property type="gene designation" value="Klhl24"/>
</dbReference>
<dbReference type="eggNOG" id="KOG1721">
    <property type="taxonomic scope" value="Eukaryota"/>
</dbReference>
<dbReference type="eggNOG" id="KOG4441">
    <property type="taxonomic scope" value="Eukaryota"/>
</dbReference>
<dbReference type="GeneTree" id="ENSGT00940000154345"/>
<dbReference type="InParanoid" id="Q56A24"/>
<dbReference type="OMA" id="NDCYDPV"/>
<dbReference type="OrthoDB" id="19132at2759"/>
<dbReference type="PhylomeDB" id="Q56A24"/>
<dbReference type="PRO" id="PR:Q56A24"/>
<dbReference type="Proteomes" id="UP000002494">
    <property type="component" value="Chromosome 11"/>
</dbReference>
<dbReference type="GO" id="GO:0005912">
    <property type="term" value="C:adherens junction"/>
    <property type="evidence" value="ECO:0000250"/>
    <property type="project" value="UniProtKB"/>
</dbReference>
<dbReference type="GO" id="GO:0030424">
    <property type="term" value="C:axon"/>
    <property type="evidence" value="ECO:0007669"/>
    <property type="project" value="UniProtKB-SubCell"/>
</dbReference>
<dbReference type="GO" id="GO:0031463">
    <property type="term" value="C:Cul3-RING ubiquitin ligase complex"/>
    <property type="evidence" value="ECO:0000250"/>
    <property type="project" value="UniProtKB"/>
</dbReference>
<dbReference type="GO" id="GO:0005737">
    <property type="term" value="C:cytoplasm"/>
    <property type="evidence" value="ECO:0000250"/>
    <property type="project" value="UniProtKB"/>
</dbReference>
<dbReference type="GO" id="GO:0030057">
    <property type="term" value="C:desmosome"/>
    <property type="evidence" value="ECO:0000250"/>
    <property type="project" value="UniProtKB"/>
</dbReference>
<dbReference type="GO" id="GO:0043204">
    <property type="term" value="C:perikaryon"/>
    <property type="evidence" value="ECO:0007669"/>
    <property type="project" value="UniProtKB-SubCell"/>
</dbReference>
<dbReference type="GO" id="GO:1990756">
    <property type="term" value="F:ubiquitin-like ligase-substrate adaptor activity"/>
    <property type="evidence" value="ECO:0000318"/>
    <property type="project" value="GO_Central"/>
</dbReference>
<dbReference type="GO" id="GO:0045109">
    <property type="term" value="P:intermediate filament organization"/>
    <property type="evidence" value="ECO:0000250"/>
    <property type="project" value="UniProtKB"/>
</dbReference>
<dbReference type="GO" id="GO:0043161">
    <property type="term" value="P:proteasome-mediated ubiquitin-dependent protein catabolic process"/>
    <property type="evidence" value="ECO:0000318"/>
    <property type="project" value="GO_Central"/>
</dbReference>
<dbReference type="GO" id="GO:0051865">
    <property type="term" value="P:protein autoubiquitination"/>
    <property type="evidence" value="ECO:0000250"/>
    <property type="project" value="UniProtKB"/>
</dbReference>
<dbReference type="GO" id="GO:0016567">
    <property type="term" value="P:protein ubiquitination"/>
    <property type="evidence" value="ECO:0000250"/>
    <property type="project" value="UniProtKB"/>
</dbReference>
<dbReference type="CDD" id="cd18463">
    <property type="entry name" value="BACK_KLHL24"/>
    <property type="match status" value="1"/>
</dbReference>
<dbReference type="CDD" id="cd18253">
    <property type="entry name" value="BTB_POZ_KLHL24_KRIP6"/>
    <property type="match status" value="1"/>
</dbReference>
<dbReference type="FunFam" id="1.25.40.420:FF:000001">
    <property type="entry name" value="Kelch-like family member 12"/>
    <property type="match status" value="1"/>
</dbReference>
<dbReference type="FunFam" id="2.120.10.80:FF:000023">
    <property type="entry name" value="Kelch-like family member 24"/>
    <property type="match status" value="1"/>
</dbReference>
<dbReference type="FunFam" id="3.30.710.10:FF:000071">
    <property type="entry name" value="Kelch-like family member 24"/>
    <property type="match status" value="1"/>
</dbReference>
<dbReference type="Gene3D" id="1.25.40.420">
    <property type="match status" value="1"/>
</dbReference>
<dbReference type="Gene3D" id="2.120.10.80">
    <property type="entry name" value="Kelch-type beta propeller"/>
    <property type="match status" value="1"/>
</dbReference>
<dbReference type="Gene3D" id="3.30.710.10">
    <property type="entry name" value="Potassium Channel Kv1.1, Chain A"/>
    <property type="match status" value="1"/>
</dbReference>
<dbReference type="InterPro" id="IPR011705">
    <property type="entry name" value="BACK"/>
</dbReference>
<dbReference type="InterPro" id="IPR017096">
    <property type="entry name" value="BTB-kelch_protein"/>
</dbReference>
<dbReference type="InterPro" id="IPR000210">
    <property type="entry name" value="BTB/POZ_dom"/>
</dbReference>
<dbReference type="InterPro" id="IPR030596">
    <property type="entry name" value="BTB_POZ_KLHL24"/>
</dbReference>
<dbReference type="InterPro" id="IPR015915">
    <property type="entry name" value="Kelch-typ_b-propeller"/>
</dbReference>
<dbReference type="InterPro" id="IPR006652">
    <property type="entry name" value="Kelch_1"/>
</dbReference>
<dbReference type="InterPro" id="IPR047071">
    <property type="entry name" value="KLHL24_BACK"/>
</dbReference>
<dbReference type="InterPro" id="IPR011333">
    <property type="entry name" value="SKP1/BTB/POZ_sf"/>
</dbReference>
<dbReference type="PANTHER" id="PTHR24412">
    <property type="entry name" value="KELCH PROTEIN"/>
    <property type="match status" value="1"/>
</dbReference>
<dbReference type="PANTHER" id="PTHR24412:SF215">
    <property type="entry name" value="KELCH-LIKE PROTEIN 24"/>
    <property type="match status" value="1"/>
</dbReference>
<dbReference type="Pfam" id="PF07707">
    <property type="entry name" value="BACK"/>
    <property type="match status" value="1"/>
</dbReference>
<dbReference type="Pfam" id="PF00651">
    <property type="entry name" value="BTB"/>
    <property type="match status" value="1"/>
</dbReference>
<dbReference type="Pfam" id="PF01344">
    <property type="entry name" value="Kelch_1"/>
    <property type="match status" value="1"/>
</dbReference>
<dbReference type="Pfam" id="PF24681">
    <property type="entry name" value="Kelch_KLHDC2_KLHL20_DRC7"/>
    <property type="match status" value="1"/>
</dbReference>
<dbReference type="PIRSF" id="PIRSF037037">
    <property type="entry name" value="Kelch-like_protein_gigaxonin"/>
    <property type="match status" value="1"/>
</dbReference>
<dbReference type="SMART" id="SM00875">
    <property type="entry name" value="BACK"/>
    <property type="match status" value="1"/>
</dbReference>
<dbReference type="SMART" id="SM00225">
    <property type="entry name" value="BTB"/>
    <property type="match status" value="1"/>
</dbReference>
<dbReference type="SMART" id="SM00612">
    <property type="entry name" value="Kelch"/>
    <property type="match status" value="6"/>
</dbReference>
<dbReference type="SUPFAM" id="SSF117281">
    <property type="entry name" value="Kelch motif"/>
    <property type="match status" value="1"/>
</dbReference>
<dbReference type="SUPFAM" id="SSF54695">
    <property type="entry name" value="POZ domain"/>
    <property type="match status" value="1"/>
</dbReference>
<dbReference type="PROSITE" id="PS50097">
    <property type="entry name" value="BTB"/>
    <property type="match status" value="1"/>
</dbReference>
<organism>
    <name type="scientific">Rattus norvegicus</name>
    <name type="common">Rat</name>
    <dbReference type="NCBI Taxonomy" id="10116"/>
    <lineage>
        <taxon>Eukaryota</taxon>
        <taxon>Metazoa</taxon>
        <taxon>Chordata</taxon>
        <taxon>Craniata</taxon>
        <taxon>Vertebrata</taxon>
        <taxon>Euteleostomi</taxon>
        <taxon>Mammalia</taxon>
        <taxon>Eutheria</taxon>
        <taxon>Euarchontoglires</taxon>
        <taxon>Glires</taxon>
        <taxon>Rodentia</taxon>
        <taxon>Myomorpha</taxon>
        <taxon>Muroidea</taxon>
        <taxon>Muridae</taxon>
        <taxon>Murinae</taxon>
        <taxon>Rattus</taxon>
    </lineage>
</organism>
<proteinExistence type="evidence at protein level"/>
<name>KLH24_RAT</name>
<protein>
    <recommendedName>
        <fullName>Kelch-like protein 24</fullName>
    </recommendedName>
    <alternativeName>
        <fullName>Kainate receptor-interacting protein for GluR6</fullName>
        <shortName>KRIP6</shortName>
    </alternativeName>
    <alternativeName>
        <fullName>Protein DRE1</fullName>
    </alternativeName>
</protein>
<comment type="function">
    <text evidence="1 3">Necessary to maintain the balance between intermediate filament stability and degradation, a process that is essential for skin integrity (By similarity). As part of the BCR(KLHL24) E3 ubiquitin ligase complex, mediates ubiquitination of KRT14 and controls its levels during keratinocytes differentiation (By similarity). Specifically reduces kainate receptor-mediated currents in hippocampal neurons, most probably by modulating channel properties (PubMed:17254796). Has a crucial role in cardiac development and function (By similarity).</text>
</comment>
<comment type="subunit">
    <text evidence="1 3">Forms homodimers. Interacts with GRIK2 (PubMed:17254796). Component of the BCR(KLHL24) E3 ubiquitin ligase complex, composed of CUL3, RBX1 and KLHL24. Interacts with CUL3. Interacts with KRT14 (By similarity).</text>
</comment>
<comment type="subcellular location">
    <subcellularLocation>
        <location evidence="3">Perikaryon</location>
    </subcellularLocation>
    <subcellularLocation>
        <location evidence="3">Cell projection</location>
        <location evidence="3">Axon</location>
    </subcellularLocation>
    <subcellularLocation>
        <location evidence="3">Cytoplasm</location>
    </subcellularLocation>
    <subcellularLocation>
        <location evidence="1">Cell junction</location>
        <location evidence="1">Desmosome</location>
    </subcellularLocation>
    <subcellularLocation>
        <location evidence="1">Cell junction</location>
        <location evidence="1">Adherens junction</location>
    </subcellularLocation>
</comment>
<comment type="tissue specificity">
    <text evidence="3">Expressed in the brain.</text>
</comment>
<comment type="developmental stage">
    <text evidence="3">In 3-week postnatal brain, prominent in the cortex and in the hippocampus. In the hippocampal formation, detectable in the CA1-CA3 pyramidal cells and in the granule cell layer of the dentate gyrus. In the cerebral cortex, expressed in all layers (I-VI) (at protein level). In 10 week old animals, tends to segregate in CA3 regions.</text>
</comment>
<comment type="PTM">
    <text evidence="1">Autoubiquitinated. Autoubiquitination leads to proteasomal degradation and is necessary to control KLHL24 levels.</text>
</comment>